<name>HIS2_CLASE</name>
<evidence type="ECO:0000255" key="1">
    <source>
        <dbReference type="HAMAP-Rule" id="MF_01020"/>
    </source>
</evidence>
<reference key="1">
    <citation type="journal article" date="2008" name="J. Bacteriol.">
        <title>Genome of the actinomycete plant pathogen Clavibacter michiganensis subsp. sepedonicus suggests recent niche adaptation.</title>
        <authorList>
            <person name="Bentley S.D."/>
            <person name="Corton C."/>
            <person name="Brown S.E."/>
            <person name="Barron A."/>
            <person name="Clark L."/>
            <person name="Doggett J."/>
            <person name="Harris B."/>
            <person name="Ormond D."/>
            <person name="Quail M.A."/>
            <person name="May G."/>
            <person name="Francis D."/>
            <person name="Knudson D."/>
            <person name="Parkhill J."/>
            <person name="Ishimaru C.A."/>
        </authorList>
    </citation>
    <scope>NUCLEOTIDE SEQUENCE [LARGE SCALE GENOMIC DNA]</scope>
    <source>
        <strain>ATCC 33113 / DSM 20744 / JCM 9667 / LMG 2889 / ICMP 2535 / C-1</strain>
    </source>
</reference>
<gene>
    <name evidence="1" type="primary">hisE</name>
    <name type="ordered locus">CMS2017</name>
</gene>
<comment type="catalytic activity">
    <reaction evidence="1">
        <text>1-(5-phospho-beta-D-ribosyl)-ATP + H2O = 1-(5-phospho-beta-D-ribosyl)-5'-AMP + diphosphate + H(+)</text>
        <dbReference type="Rhea" id="RHEA:22828"/>
        <dbReference type="ChEBI" id="CHEBI:15377"/>
        <dbReference type="ChEBI" id="CHEBI:15378"/>
        <dbReference type="ChEBI" id="CHEBI:33019"/>
        <dbReference type="ChEBI" id="CHEBI:59457"/>
        <dbReference type="ChEBI" id="CHEBI:73183"/>
        <dbReference type="EC" id="3.6.1.31"/>
    </reaction>
</comment>
<comment type="pathway">
    <text evidence="1">Amino-acid biosynthesis; L-histidine biosynthesis; L-histidine from 5-phospho-alpha-D-ribose 1-diphosphate: step 2/9.</text>
</comment>
<comment type="subcellular location">
    <subcellularLocation>
        <location evidence="1">Cytoplasm</location>
    </subcellularLocation>
</comment>
<comment type="similarity">
    <text evidence="1">Belongs to the PRA-PH family.</text>
</comment>
<keyword id="KW-0028">Amino-acid biosynthesis</keyword>
<keyword id="KW-0067">ATP-binding</keyword>
<keyword id="KW-0963">Cytoplasm</keyword>
<keyword id="KW-0368">Histidine biosynthesis</keyword>
<keyword id="KW-0378">Hydrolase</keyword>
<keyword id="KW-0547">Nucleotide-binding</keyword>
<sequence>MKTFDDLFGELTRIAAERPEGSGTVRELDGGVHAIGKKVVEEAAEVWMAAEHESDDRAAEEISQLLYHVQVMMIARGLTLEDVGRHL</sequence>
<organism>
    <name type="scientific">Clavibacter sepedonicus</name>
    <name type="common">Clavibacter michiganensis subsp. sepedonicus</name>
    <dbReference type="NCBI Taxonomy" id="31964"/>
    <lineage>
        <taxon>Bacteria</taxon>
        <taxon>Bacillati</taxon>
        <taxon>Actinomycetota</taxon>
        <taxon>Actinomycetes</taxon>
        <taxon>Micrococcales</taxon>
        <taxon>Microbacteriaceae</taxon>
        <taxon>Clavibacter</taxon>
    </lineage>
</organism>
<dbReference type="EC" id="3.6.1.31" evidence="1"/>
<dbReference type="EMBL" id="AM849034">
    <property type="protein sequence ID" value="CAQ02114.1"/>
    <property type="molecule type" value="Genomic_DNA"/>
</dbReference>
<dbReference type="RefSeq" id="WP_012038459.1">
    <property type="nucleotide sequence ID" value="NZ_MZMN01000003.1"/>
</dbReference>
<dbReference type="SMR" id="B0REU9"/>
<dbReference type="STRING" id="31964.CMS2017"/>
<dbReference type="KEGG" id="cms:CMS2017"/>
<dbReference type="eggNOG" id="COG0140">
    <property type="taxonomic scope" value="Bacteria"/>
</dbReference>
<dbReference type="HOGENOM" id="CLU_123337_2_1_11"/>
<dbReference type="OrthoDB" id="3212875at2"/>
<dbReference type="UniPathway" id="UPA00031">
    <property type="reaction ID" value="UER00007"/>
</dbReference>
<dbReference type="Proteomes" id="UP000001318">
    <property type="component" value="Chromosome"/>
</dbReference>
<dbReference type="GO" id="GO:0005737">
    <property type="term" value="C:cytoplasm"/>
    <property type="evidence" value="ECO:0007669"/>
    <property type="project" value="UniProtKB-SubCell"/>
</dbReference>
<dbReference type="GO" id="GO:0005524">
    <property type="term" value="F:ATP binding"/>
    <property type="evidence" value="ECO:0007669"/>
    <property type="project" value="UniProtKB-KW"/>
</dbReference>
<dbReference type="GO" id="GO:0004636">
    <property type="term" value="F:phosphoribosyl-ATP diphosphatase activity"/>
    <property type="evidence" value="ECO:0007669"/>
    <property type="project" value="UniProtKB-UniRule"/>
</dbReference>
<dbReference type="GO" id="GO:0000105">
    <property type="term" value="P:L-histidine biosynthetic process"/>
    <property type="evidence" value="ECO:0007669"/>
    <property type="project" value="UniProtKB-UniRule"/>
</dbReference>
<dbReference type="CDD" id="cd11547">
    <property type="entry name" value="NTP-PPase_HisE"/>
    <property type="match status" value="1"/>
</dbReference>
<dbReference type="Gene3D" id="1.10.287.1080">
    <property type="entry name" value="MazG-like"/>
    <property type="match status" value="1"/>
</dbReference>
<dbReference type="HAMAP" id="MF_01020">
    <property type="entry name" value="HisE"/>
    <property type="match status" value="1"/>
</dbReference>
<dbReference type="InterPro" id="IPR008179">
    <property type="entry name" value="HisE"/>
</dbReference>
<dbReference type="InterPro" id="IPR021130">
    <property type="entry name" value="PRib-ATP_PPHydrolase-like"/>
</dbReference>
<dbReference type="NCBIfam" id="TIGR03188">
    <property type="entry name" value="histidine_hisI"/>
    <property type="match status" value="1"/>
</dbReference>
<dbReference type="NCBIfam" id="NF001610">
    <property type="entry name" value="PRK00400.1-1"/>
    <property type="match status" value="1"/>
</dbReference>
<dbReference type="PANTHER" id="PTHR42945">
    <property type="entry name" value="HISTIDINE BIOSYNTHESIS BIFUNCTIONAL PROTEIN"/>
    <property type="match status" value="1"/>
</dbReference>
<dbReference type="PANTHER" id="PTHR42945:SF1">
    <property type="entry name" value="HISTIDINE BIOSYNTHESIS BIFUNCTIONAL PROTEIN HIS7"/>
    <property type="match status" value="1"/>
</dbReference>
<dbReference type="Pfam" id="PF01503">
    <property type="entry name" value="PRA-PH"/>
    <property type="match status" value="1"/>
</dbReference>
<dbReference type="SUPFAM" id="SSF101386">
    <property type="entry name" value="all-alpha NTP pyrophosphatases"/>
    <property type="match status" value="1"/>
</dbReference>
<feature type="chain" id="PRO_1000084168" description="Phosphoribosyl-ATP pyrophosphatase">
    <location>
        <begin position="1"/>
        <end position="87"/>
    </location>
</feature>
<proteinExistence type="inferred from homology"/>
<protein>
    <recommendedName>
        <fullName evidence="1">Phosphoribosyl-ATP pyrophosphatase</fullName>
        <shortName evidence="1">PRA-PH</shortName>
        <ecNumber evidence="1">3.6.1.31</ecNumber>
    </recommendedName>
</protein>
<accession>B0REU9</accession>